<dbReference type="EMBL" id="CP000386">
    <property type="protein sequence ID" value="ABG05104.1"/>
    <property type="molecule type" value="Genomic_DNA"/>
</dbReference>
<dbReference type="RefSeq" id="WP_011565119.1">
    <property type="nucleotide sequence ID" value="NC_008148.1"/>
</dbReference>
<dbReference type="SMR" id="Q1AU24"/>
<dbReference type="STRING" id="266117.Rxyl_2160"/>
<dbReference type="KEGG" id="rxy:Rxyl_2160"/>
<dbReference type="eggNOG" id="COG0048">
    <property type="taxonomic scope" value="Bacteria"/>
</dbReference>
<dbReference type="HOGENOM" id="CLU_104295_1_2_11"/>
<dbReference type="OrthoDB" id="9802366at2"/>
<dbReference type="PhylomeDB" id="Q1AU24"/>
<dbReference type="Proteomes" id="UP000006637">
    <property type="component" value="Chromosome"/>
</dbReference>
<dbReference type="GO" id="GO:0015935">
    <property type="term" value="C:small ribosomal subunit"/>
    <property type="evidence" value="ECO:0007669"/>
    <property type="project" value="InterPro"/>
</dbReference>
<dbReference type="GO" id="GO:0019843">
    <property type="term" value="F:rRNA binding"/>
    <property type="evidence" value="ECO:0007669"/>
    <property type="project" value="UniProtKB-UniRule"/>
</dbReference>
<dbReference type="GO" id="GO:0003735">
    <property type="term" value="F:structural constituent of ribosome"/>
    <property type="evidence" value="ECO:0007669"/>
    <property type="project" value="InterPro"/>
</dbReference>
<dbReference type="GO" id="GO:0000049">
    <property type="term" value="F:tRNA binding"/>
    <property type="evidence" value="ECO:0007669"/>
    <property type="project" value="UniProtKB-UniRule"/>
</dbReference>
<dbReference type="GO" id="GO:0006412">
    <property type="term" value="P:translation"/>
    <property type="evidence" value="ECO:0007669"/>
    <property type="project" value="UniProtKB-UniRule"/>
</dbReference>
<dbReference type="CDD" id="cd03368">
    <property type="entry name" value="Ribosomal_S12"/>
    <property type="match status" value="1"/>
</dbReference>
<dbReference type="FunFam" id="2.40.50.140:FF:000001">
    <property type="entry name" value="30S ribosomal protein S12"/>
    <property type="match status" value="1"/>
</dbReference>
<dbReference type="Gene3D" id="2.40.50.140">
    <property type="entry name" value="Nucleic acid-binding proteins"/>
    <property type="match status" value="1"/>
</dbReference>
<dbReference type="HAMAP" id="MF_00403_B">
    <property type="entry name" value="Ribosomal_uS12_B"/>
    <property type="match status" value="1"/>
</dbReference>
<dbReference type="InterPro" id="IPR012340">
    <property type="entry name" value="NA-bd_OB-fold"/>
</dbReference>
<dbReference type="InterPro" id="IPR006032">
    <property type="entry name" value="Ribosomal_uS12"/>
</dbReference>
<dbReference type="InterPro" id="IPR005679">
    <property type="entry name" value="Ribosomal_uS12_bac"/>
</dbReference>
<dbReference type="NCBIfam" id="TIGR00981">
    <property type="entry name" value="rpsL_bact"/>
    <property type="match status" value="1"/>
</dbReference>
<dbReference type="PANTHER" id="PTHR11652">
    <property type="entry name" value="30S RIBOSOMAL PROTEIN S12 FAMILY MEMBER"/>
    <property type="match status" value="1"/>
</dbReference>
<dbReference type="Pfam" id="PF00164">
    <property type="entry name" value="Ribosom_S12_S23"/>
    <property type="match status" value="1"/>
</dbReference>
<dbReference type="PIRSF" id="PIRSF002133">
    <property type="entry name" value="Ribosomal_S12/S23"/>
    <property type="match status" value="1"/>
</dbReference>
<dbReference type="PRINTS" id="PR01034">
    <property type="entry name" value="RIBOSOMALS12"/>
</dbReference>
<dbReference type="SUPFAM" id="SSF50249">
    <property type="entry name" value="Nucleic acid-binding proteins"/>
    <property type="match status" value="1"/>
</dbReference>
<dbReference type="PROSITE" id="PS00055">
    <property type="entry name" value="RIBOSOMAL_S12"/>
    <property type="match status" value="1"/>
</dbReference>
<feature type="chain" id="PRO_0000263587" description="Small ribosomal subunit protein uS12">
    <location>
        <begin position="1"/>
        <end position="122"/>
    </location>
</feature>
<feature type="region of interest" description="Disordered" evidence="3">
    <location>
        <begin position="1"/>
        <end position="45"/>
    </location>
</feature>
<feature type="compositionally biased region" description="Polar residues" evidence="3">
    <location>
        <begin position="18"/>
        <end position="28"/>
    </location>
</feature>
<feature type="modified residue" description="3-methylthioaspartic acid" evidence="1">
    <location>
        <position position="89"/>
    </location>
</feature>
<proteinExistence type="inferred from homology"/>
<reference key="1">
    <citation type="submission" date="2006-06" db="EMBL/GenBank/DDBJ databases">
        <title>Complete sequence of Rubrobacter xylanophilus DSM 9941.</title>
        <authorList>
            <consortium name="US DOE Joint Genome Institute"/>
            <person name="Copeland A."/>
            <person name="Lucas S."/>
            <person name="Lapidus A."/>
            <person name="Barry K."/>
            <person name="Detter J.C."/>
            <person name="Glavina del Rio T."/>
            <person name="Hammon N."/>
            <person name="Israni S."/>
            <person name="Dalin E."/>
            <person name="Tice H."/>
            <person name="Pitluck S."/>
            <person name="Munk A.C."/>
            <person name="Brettin T."/>
            <person name="Bruce D."/>
            <person name="Han C."/>
            <person name="Tapia R."/>
            <person name="Gilna P."/>
            <person name="Schmutz J."/>
            <person name="Larimer F."/>
            <person name="Land M."/>
            <person name="Hauser L."/>
            <person name="Kyrpides N."/>
            <person name="Lykidis A."/>
            <person name="da Costa M.S."/>
            <person name="Rainey F.A."/>
            <person name="Empadinhas N."/>
            <person name="Jolivet E."/>
            <person name="Battista J.R."/>
            <person name="Richardson P."/>
        </authorList>
    </citation>
    <scope>NUCLEOTIDE SEQUENCE [LARGE SCALE GENOMIC DNA]</scope>
    <source>
        <strain>DSM 9941 / JCM 11954 / NBRC 16129 / PRD-1</strain>
    </source>
</reference>
<comment type="function">
    <text evidence="2">With S4 and S5 plays an important role in translational accuracy.</text>
</comment>
<comment type="function">
    <text evidence="2">Interacts with and stabilizes bases of the 16S rRNA that are involved in tRNA selection in the A site and with the mRNA backbone. Located at the interface of the 30S and 50S subunits, it traverses the body of the 30S subunit contacting proteins on the other side and probably holding the rRNA structure together. The combined cluster of proteins S8, S12 and S17 appears to hold together the shoulder and platform of the 30S subunit.</text>
</comment>
<comment type="subunit">
    <text evidence="2">Part of the 30S ribosomal subunit. Contacts proteins S8 and S17. May interact with IF1 in the 30S initiation complex.</text>
</comment>
<comment type="similarity">
    <text evidence="2">Belongs to the universal ribosomal protein uS12 family.</text>
</comment>
<keyword id="KW-0488">Methylation</keyword>
<keyword id="KW-1185">Reference proteome</keyword>
<keyword id="KW-0687">Ribonucleoprotein</keyword>
<keyword id="KW-0689">Ribosomal protein</keyword>
<keyword id="KW-0694">RNA-binding</keyword>
<keyword id="KW-0699">rRNA-binding</keyword>
<keyword id="KW-0820">tRNA-binding</keyword>
<protein>
    <recommendedName>
        <fullName evidence="2">Small ribosomal subunit protein uS12</fullName>
    </recommendedName>
    <alternativeName>
        <fullName evidence="4">30S ribosomal protein S12</fullName>
    </alternativeName>
</protein>
<evidence type="ECO:0000250" key="1"/>
<evidence type="ECO:0000255" key="2">
    <source>
        <dbReference type="HAMAP-Rule" id="MF_00403"/>
    </source>
</evidence>
<evidence type="ECO:0000256" key="3">
    <source>
        <dbReference type="SAM" id="MobiDB-lite"/>
    </source>
</evidence>
<evidence type="ECO:0000305" key="4"/>
<name>RS12_RUBXD</name>
<sequence>MPTTNQLVRKERKRQTKKTATPALQGSPQRRGVCTRVSTTTPKKPNSALRKIARVRLTNGHEVTAYVPGEGHNLQEHSVVLVRGGRVKDLPGVRYKVVRGALDALGVEGRKQGRSKYGTKKS</sequence>
<organism>
    <name type="scientific">Rubrobacter xylanophilus (strain DSM 9941 / JCM 11954 / NBRC 16129 / PRD-1)</name>
    <dbReference type="NCBI Taxonomy" id="266117"/>
    <lineage>
        <taxon>Bacteria</taxon>
        <taxon>Bacillati</taxon>
        <taxon>Actinomycetota</taxon>
        <taxon>Rubrobacteria</taxon>
        <taxon>Rubrobacterales</taxon>
        <taxon>Rubrobacteraceae</taxon>
        <taxon>Rubrobacter</taxon>
    </lineage>
</organism>
<accession>Q1AU24</accession>
<gene>
    <name evidence="2" type="primary">rpsL</name>
    <name type="ordered locus">Rxyl_2160</name>
</gene>